<name>RRF_FRATH</name>
<dbReference type="EMBL" id="AM233362">
    <property type="protein sequence ID" value="CAJ78668.1"/>
    <property type="molecule type" value="Genomic_DNA"/>
</dbReference>
<dbReference type="RefSeq" id="WP_003014302.1">
    <property type="nucleotide sequence ID" value="NZ_CP009694.1"/>
</dbReference>
<dbReference type="SMR" id="Q2A5H9"/>
<dbReference type="GeneID" id="75264270"/>
<dbReference type="KEGG" id="ftl:FTL_0227"/>
<dbReference type="Proteomes" id="UP000001944">
    <property type="component" value="Chromosome"/>
</dbReference>
<dbReference type="GO" id="GO:0005829">
    <property type="term" value="C:cytosol"/>
    <property type="evidence" value="ECO:0007669"/>
    <property type="project" value="GOC"/>
</dbReference>
<dbReference type="GO" id="GO:0043023">
    <property type="term" value="F:ribosomal large subunit binding"/>
    <property type="evidence" value="ECO:0007669"/>
    <property type="project" value="TreeGrafter"/>
</dbReference>
<dbReference type="GO" id="GO:0002184">
    <property type="term" value="P:cytoplasmic translational termination"/>
    <property type="evidence" value="ECO:0007669"/>
    <property type="project" value="TreeGrafter"/>
</dbReference>
<dbReference type="CDD" id="cd00520">
    <property type="entry name" value="RRF"/>
    <property type="match status" value="1"/>
</dbReference>
<dbReference type="FunFam" id="1.10.132.20:FF:000001">
    <property type="entry name" value="Ribosome-recycling factor"/>
    <property type="match status" value="1"/>
</dbReference>
<dbReference type="FunFam" id="3.30.1360.40:FF:000001">
    <property type="entry name" value="Ribosome-recycling factor"/>
    <property type="match status" value="1"/>
</dbReference>
<dbReference type="Gene3D" id="3.30.1360.40">
    <property type="match status" value="1"/>
</dbReference>
<dbReference type="Gene3D" id="1.10.132.20">
    <property type="entry name" value="Ribosome-recycling factor"/>
    <property type="match status" value="1"/>
</dbReference>
<dbReference type="HAMAP" id="MF_00040">
    <property type="entry name" value="RRF"/>
    <property type="match status" value="1"/>
</dbReference>
<dbReference type="InterPro" id="IPR002661">
    <property type="entry name" value="Ribosome_recyc_fac"/>
</dbReference>
<dbReference type="InterPro" id="IPR023584">
    <property type="entry name" value="Ribosome_recyc_fac_dom"/>
</dbReference>
<dbReference type="InterPro" id="IPR036191">
    <property type="entry name" value="RRF_sf"/>
</dbReference>
<dbReference type="NCBIfam" id="TIGR00496">
    <property type="entry name" value="frr"/>
    <property type="match status" value="1"/>
</dbReference>
<dbReference type="PANTHER" id="PTHR20982:SF3">
    <property type="entry name" value="MITOCHONDRIAL RIBOSOME RECYCLING FACTOR PSEUDO 1"/>
    <property type="match status" value="1"/>
</dbReference>
<dbReference type="PANTHER" id="PTHR20982">
    <property type="entry name" value="RIBOSOME RECYCLING FACTOR"/>
    <property type="match status" value="1"/>
</dbReference>
<dbReference type="Pfam" id="PF01765">
    <property type="entry name" value="RRF"/>
    <property type="match status" value="1"/>
</dbReference>
<dbReference type="SUPFAM" id="SSF55194">
    <property type="entry name" value="Ribosome recycling factor, RRF"/>
    <property type="match status" value="1"/>
</dbReference>
<gene>
    <name evidence="1" type="primary">frr</name>
    <name type="ordered locus">FTL_0227</name>
</gene>
<proteinExistence type="inferred from homology"/>
<evidence type="ECO:0000255" key="1">
    <source>
        <dbReference type="HAMAP-Rule" id="MF_00040"/>
    </source>
</evidence>
<accession>Q2A5H9</accession>
<comment type="function">
    <text evidence="1">Responsible for the release of ribosomes from messenger RNA at the termination of protein biosynthesis. May increase the efficiency of translation by recycling ribosomes from one round of translation to another.</text>
</comment>
<comment type="subcellular location">
    <subcellularLocation>
        <location evidence="1">Cytoplasm</location>
    </subcellularLocation>
</comment>
<comment type="similarity">
    <text evidence="1">Belongs to the RRF family.</text>
</comment>
<keyword id="KW-0963">Cytoplasm</keyword>
<keyword id="KW-0648">Protein biosynthesis</keyword>
<keyword id="KW-1185">Reference proteome</keyword>
<protein>
    <recommendedName>
        <fullName evidence="1">Ribosome-recycling factor</fullName>
        <shortName evidence="1">RRF</shortName>
    </recommendedName>
    <alternativeName>
        <fullName evidence="1">Ribosome-releasing factor</fullName>
    </alternativeName>
</protein>
<feature type="chain" id="PRO_1000003166" description="Ribosome-recycling factor">
    <location>
        <begin position="1"/>
        <end position="185"/>
    </location>
</feature>
<reference key="1">
    <citation type="submission" date="2006-03" db="EMBL/GenBank/DDBJ databases">
        <title>Complete genome sequence of Francisella tularensis LVS (Live Vaccine Strain).</title>
        <authorList>
            <person name="Chain P."/>
            <person name="Larimer F."/>
            <person name="Land M."/>
            <person name="Stilwagen S."/>
            <person name="Larsson P."/>
            <person name="Bearden S."/>
            <person name="Chu M."/>
            <person name="Oyston P."/>
            <person name="Forsman M."/>
            <person name="Andersson S."/>
            <person name="Lindler L."/>
            <person name="Titball R."/>
            <person name="Garcia E."/>
        </authorList>
    </citation>
    <scope>NUCLEOTIDE SEQUENCE [LARGE SCALE GENOMIC DNA]</scope>
    <source>
        <strain>LVS</strain>
    </source>
</reference>
<sequence length="185" mass="20553">MINDILKDAENRMKKSLEVLADDLAKIRTGRAHPDLLAHVTIDYYGVETPITQAANITVLDARTLGITPWEKGLSSKIEKAILTSDLGLNPTNLGDSLRVPMPALNEERRKELVKLVKSETEAGRVSIRNIRRDANGDIKELLKEKEITEDQAKKAEDDIQKITDKMIAQADALAAKKEQDLMAV</sequence>
<organism>
    <name type="scientific">Francisella tularensis subsp. holarctica (strain LVS)</name>
    <dbReference type="NCBI Taxonomy" id="376619"/>
    <lineage>
        <taxon>Bacteria</taxon>
        <taxon>Pseudomonadati</taxon>
        <taxon>Pseudomonadota</taxon>
        <taxon>Gammaproteobacteria</taxon>
        <taxon>Thiotrichales</taxon>
        <taxon>Francisellaceae</taxon>
        <taxon>Francisella</taxon>
    </lineage>
</organism>